<keyword id="KW-0249">Electron transport</keyword>
<keyword id="KW-0349">Heme</keyword>
<keyword id="KW-0408">Iron</keyword>
<keyword id="KW-0472">Membrane</keyword>
<keyword id="KW-0479">Metal-binding</keyword>
<keyword id="KW-0496">Mitochondrion</keyword>
<keyword id="KW-0999">Mitochondrion inner membrane</keyword>
<keyword id="KW-0679">Respiratory chain</keyword>
<keyword id="KW-0812">Transmembrane</keyword>
<keyword id="KW-1133">Transmembrane helix</keyword>
<keyword id="KW-0813">Transport</keyword>
<keyword id="KW-0830">Ubiquinone</keyword>
<feature type="chain" id="PRO_0000255035" description="Cytochrome b">
    <location>
        <begin position="1"/>
        <end position="379"/>
    </location>
</feature>
<feature type="transmembrane region" description="Helical" evidence="2">
    <location>
        <begin position="33"/>
        <end position="53"/>
    </location>
</feature>
<feature type="transmembrane region" description="Helical" evidence="2">
    <location>
        <begin position="77"/>
        <end position="98"/>
    </location>
</feature>
<feature type="transmembrane region" description="Helical" evidence="2">
    <location>
        <begin position="113"/>
        <end position="133"/>
    </location>
</feature>
<feature type="transmembrane region" description="Helical" evidence="2">
    <location>
        <begin position="178"/>
        <end position="198"/>
    </location>
</feature>
<feature type="transmembrane region" description="Helical" evidence="2">
    <location>
        <begin position="226"/>
        <end position="246"/>
    </location>
</feature>
<feature type="transmembrane region" description="Helical" evidence="2">
    <location>
        <begin position="288"/>
        <end position="308"/>
    </location>
</feature>
<feature type="transmembrane region" description="Helical" evidence="2">
    <location>
        <begin position="320"/>
        <end position="340"/>
    </location>
</feature>
<feature type="transmembrane region" description="Helical" evidence="2">
    <location>
        <begin position="347"/>
        <end position="367"/>
    </location>
</feature>
<feature type="binding site" description="axial binding residue" evidence="2">
    <location>
        <position position="83"/>
    </location>
    <ligand>
        <name>heme b</name>
        <dbReference type="ChEBI" id="CHEBI:60344"/>
        <label>b562</label>
    </ligand>
    <ligandPart>
        <name>Fe</name>
        <dbReference type="ChEBI" id="CHEBI:18248"/>
    </ligandPart>
</feature>
<feature type="binding site" description="axial binding residue" evidence="2">
    <location>
        <position position="97"/>
    </location>
    <ligand>
        <name>heme b</name>
        <dbReference type="ChEBI" id="CHEBI:60344"/>
        <label>b566</label>
    </ligand>
    <ligandPart>
        <name>Fe</name>
        <dbReference type="ChEBI" id="CHEBI:18248"/>
    </ligandPart>
</feature>
<feature type="binding site" description="axial binding residue" evidence="2">
    <location>
        <position position="182"/>
    </location>
    <ligand>
        <name>heme b</name>
        <dbReference type="ChEBI" id="CHEBI:60344"/>
        <label>b562</label>
    </ligand>
    <ligandPart>
        <name>Fe</name>
        <dbReference type="ChEBI" id="CHEBI:18248"/>
    </ligandPart>
</feature>
<feature type="binding site" description="axial binding residue" evidence="2">
    <location>
        <position position="196"/>
    </location>
    <ligand>
        <name>heme b</name>
        <dbReference type="ChEBI" id="CHEBI:60344"/>
        <label>b566</label>
    </ligand>
    <ligandPart>
        <name>Fe</name>
        <dbReference type="ChEBI" id="CHEBI:18248"/>
    </ligandPart>
</feature>
<feature type="binding site" evidence="2">
    <location>
        <position position="201"/>
    </location>
    <ligand>
        <name>a ubiquinone</name>
        <dbReference type="ChEBI" id="CHEBI:16389"/>
    </ligand>
</feature>
<feature type="sequence variant" description="In strain: Isolate LVT 2035.">
    <original>I</original>
    <variation>V</variation>
    <location>
        <position position="42"/>
    </location>
</feature>
<feature type="sequence variant" description="In strain: Isolate LVT 2035.">
    <original>A</original>
    <variation>T</variation>
    <location>
        <position position="67"/>
    </location>
</feature>
<feature type="sequence variant" description="In strain: Isolate LVT 2035.">
    <original>M</original>
    <variation>I</variation>
    <location>
        <position position="82"/>
    </location>
</feature>
<feature type="sequence variant" description="In strain: Isolate LVT 2035.">
    <original>A</original>
    <variation>D</variation>
    <location>
        <position position="127"/>
    </location>
</feature>
<feature type="sequence variant" description="In strain: Isolate LVT 2035.">
    <original>I</original>
    <variation>V</variation>
    <location>
        <position position="295"/>
    </location>
</feature>
<reference key="1">
    <citation type="journal article" date="1998" name="Mol. Phylogenet. Evol.">
        <title>Phylogenetic relationships and geographic structure in pocket gophers in the genus Thomomys.</title>
        <authorList>
            <person name="Smith M.F."/>
        </authorList>
    </citation>
    <scope>NUCLEOTIDE SEQUENCE [GENOMIC DNA]</scope>
    <source>
        <strain>Isolate MVZ 156536</strain>
    </source>
</reference>
<reference key="2">
    <citation type="journal article" date="2005" name="J. Mammal.">
        <title>Phylogenetics of the new world rodent family Heteromyidae.</title>
        <authorList>
            <person name="Alexander L.F."/>
            <person name="Riddle B.R."/>
        </authorList>
    </citation>
    <scope>NUCLEOTIDE SEQUENCE [GENOMIC DNA]</scope>
    <source>
        <strain>Isolate LVT 2035</strain>
    </source>
</reference>
<comment type="function">
    <text evidence="2">Component of the ubiquinol-cytochrome c reductase complex (complex III or cytochrome b-c1 complex) that is part of the mitochondrial respiratory chain. The b-c1 complex mediates electron transfer from ubiquinol to cytochrome c. Contributes to the generation of a proton gradient across the mitochondrial membrane that is then used for ATP synthesis.</text>
</comment>
<comment type="cofactor">
    <cofactor evidence="2">
        <name>heme b</name>
        <dbReference type="ChEBI" id="CHEBI:60344"/>
    </cofactor>
    <text evidence="2">Binds 2 heme b groups non-covalently.</text>
</comment>
<comment type="subunit">
    <text evidence="2">The cytochrome bc1 complex contains 11 subunits: 3 respiratory subunits (MT-CYB, CYC1 and UQCRFS1), 2 core proteins (UQCRC1 and UQCRC2) and 6 low-molecular weight proteins (UQCRH/QCR6, UQCRB/QCR7, UQCRQ/QCR8, UQCR10/QCR9, UQCR11/QCR10 and a cleavage product of UQCRFS1). This cytochrome bc1 complex then forms a dimer.</text>
</comment>
<comment type="subcellular location">
    <subcellularLocation>
        <location evidence="2">Mitochondrion inner membrane</location>
        <topology evidence="2">Multi-pass membrane protein</topology>
    </subcellularLocation>
</comment>
<comment type="miscellaneous">
    <text evidence="1">Heme 1 (or BL or b562) is low-potential and absorbs at about 562 nm, and heme 2 (or BH or b566) is high-potential and absorbs at about 566 nm.</text>
</comment>
<comment type="similarity">
    <text evidence="3 4">Belongs to the cytochrome b family.</text>
</comment>
<comment type="caution">
    <text evidence="2">The full-length protein contains only eight transmembrane helices, not nine as predicted by bioinformatics tools.</text>
</comment>
<sequence>MTIMRKTHPLMKMVNHAFIDLPTPANISGWWNFGSLLGLCLIIQIASGLFLAMHYTPDTLTAFSSVAHICRDVNYGWLIRYMHANGASLFFICLYLHIGRGIYYGSYXYLETWNIGIILLFLTMATAFMGYVLPWGQMSFWGATVITNLLSAIPYIGTDLVEWIWGGFSVDKATLNRFFAFHFILPFIIAAMAMVHLLFLHETGSNNPLGIPSDCDKIPFHPYYTTKDFLGIVLLLAFFFTMVLFFPDLLGDPDNYSPANPLNTPPHIKPEWYFLFAYAILRSIPNKLGGVIALIMSILVLALLPHIQTSKQRSLMFRPISQFLFWLLVADVLVLTWIGGQPVEPPFIIIGQIASLLYFTIILALMPIAGIIENKMLKW</sequence>
<organism>
    <name type="scientific">Dipodomys agilis</name>
    <name type="common">Agile kangaroo rat</name>
    <dbReference type="NCBI Taxonomy" id="50722"/>
    <lineage>
        <taxon>Eukaryota</taxon>
        <taxon>Metazoa</taxon>
        <taxon>Chordata</taxon>
        <taxon>Craniata</taxon>
        <taxon>Vertebrata</taxon>
        <taxon>Euteleostomi</taxon>
        <taxon>Mammalia</taxon>
        <taxon>Eutheria</taxon>
        <taxon>Euarchontoglires</taxon>
        <taxon>Glires</taxon>
        <taxon>Rodentia</taxon>
        <taxon>Castorimorpha</taxon>
        <taxon>Heteromyidae</taxon>
        <taxon>Dipodomyinae</taxon>
        <taxon>Dipodomys</taxon>
    </lineage>
</organism>
<gene>
    <name type="primary">MT-CYB</name>
    <name type="synonym">COB</name>
    <name type="synonym">CYTB</name>
    <name type="synonym">MTCYB</name>
</gene>
<accession>O48009</accession>
<accession>Q508N7</accession>
<evidence type="ECO:0000250" key="1"/>
<evidence type="ECO:0000250" key="2">
    <source>
        <dbReference type="UniProtKB" id="P00157"/>
    </source>
</evidence>
<evidence type="ECO:0000255" key="3">
    <source>
        <dbReference type="PROSITE-ProRule" id="PRU00967"/>
    </source>
</evidence>
<evidence type="ECO:0000255" key="4">
    <source>
        <dbReference type="PROSITE-ProRule" id="PRU00968"/>
    </source>
</evidence>
<name>CYB_DIPAG</name>
<protein>
    <recommendedName>
        <fullName>Cytochrome b</fullName>
    </recommendedName>
    <alternativeName>
        <fullName>Complex III subunit 3</fullName>
    </alternativeName>
    <alternativeName>
        <fullName>Complex III subunit III</fullName>
    </alternativeName>
    <alternativeName>
        <fullName>Cytochrome b-c1 complex subunit 3</fullName>
    </alternativeName>
    <alternativeName>
        <fullName>Ubiquinol-cytochrome-c reductase complex cytochrome b subunit</fullName>
    </alternativeName>
</protein>
<geneLocation type="mitochondrion"/>
<dbReference type="EMBL" id="U65303">
    <property type="protein sequence ID" value="AAC39972.1"/>
    <property type="molecule type" value="Genomic_DNA"/>
</dbReference>
<dbReference type="EMBL" id="AY926366">
    <property type="protein sequence ID" value="AAY23209.1"/>
    <property type="molecule type" value="Genomic_DNA"/>
</dbReference>
<dbReference type="GO" id="GO:0005743">
    <property type="term" value="C:mitochondrial inner membrane"/>
    <property type="evidence" value="ECO:0007669"/>
    <property type="project" value="UniProtKB-SubCell"/>
</dbReference>
<dbReference type="GO" id="GO:0045275">
    <property type="term" value="C:respiratory chain complex III"/>
    <property type="evidence" value="ECO:0007669"/>
    <property type="project" value="InterPro"/>
</dbReference>
<dbReference type="GO" id="GO:0046872">
    <property type="term" value="F:metal ion binding"/>
    <property type="evidence" value="ECO:0007669"/>
    <property type="project" value="UniProtKB-KW"/>
</dbReference>
<dbReference type="GO" id="GO:0008121">
    <property type="term" value="F:ubiquinol-cytochrome-c reductase activity"/>
    <property type="evidence" value="ECO:0007669"/>
    <property type="project" value="InterPro"/>
</dbReference>
<dbReference type="GO" id="GO:0006122">
    <property type="term" value="P:mitochondrial electron transport, ubiquinol to cytochrome c"/>
    <property type="evidence" value="ECO:0007669"/>
    <property type="project" value="TreeGrafter"/>
</dbReference>
<dbReference type="CDD" id="cd00290">
    <property type="entry name" value="cytochrome_b_C"/>
    <property type="match status" value="1"/>
</dbReference>
<dbReference type="CDD" id="cd00284">
    <property type="entry name" value="Cytochrome_b_N"/>
    <property type="match status" value="1"/>
</dbReference>
<dbReference type="FunFam" id="1.20.810.10:FF:000002">
    <property type="entry name" value="Cytochrome b"/>
    <property type="match status" value="1"/>
</dbReference>
<dbReference type="Gene3D" id="1.20.810.10">
    <property type="entry name" value="Cytochrome Bc1 Complex, Chain C"/>
    <property type="match status" value="1"/>
</dbReference>
<dbReference type="InterPro" id="IPR005798">
    <property type="entry name" value="Cyt_b/b6_C"/>
</dbReference>
<dbReference type="InterPro" id="IPR036150">
    <property type="entry name" value="Cyt_b/b6_C_sf"/>
</dbReference>
<dbReference type="InterPro" id="IPR005797">
    <property type="entry name" value="Cyt_b/b6_N"/>
</dbReference>
<dbReference type="InterPro" id="IPR027387">
    <property type="entry name" value="Cytb/b6-like_sf"/>
</dbReference>
<dbReference type="InterPro" id="IPR030689">
    <property type="entry name" value="Cytochrome_b"/>
</dbReference>
<dbReference type="InterPro" id="IPR048260">
    <property type="entry name" value="Cytochrome_b_C_euk/bac"/>
</dbReference>
<dbReference type="InterPro" id="IPR048259">
    <property type="entry name" value="Cytochrome_b_N_euk/bac"/>
</dbReference>
<dbReference type="InterPro" id="IPR016174">
    <property type="entry name" value="Di-haem_cyt_TM"/>
</dbReference>
<dbReference type="PANTHER" id="PTHR19271">
    <property type="entry name" value="CYTOCHROME B"/>
    <property type="match status" value="1"/>
</dbReference>
<dbReference type="PANTHER" id="PTHR19271:SF16">
    <property type="entry name" value="CYTOCHROME B"/>
    <property type="match status" value="1"/>
</dbReference>
<dbReference type="Pfam" id="PF00032">
    <property type="entry name" value="Cytochrom_B_C"/>
    <property type="match status" value="1"/>
</dbReference>
<dbReference type="Pfam" id="PF00033">
    <property type="entry name" value="Cytochrome_B"/>
    <property type="match status" value="1"/>
</dbReference>
<dbReference type="PIRSF" id="PIRSF038885">
    <property type="entry name" value="COB"/>
    <property type="match status" value="1"/>
</dbReference>
<dbReference type="SUPFAM" id="SSF81648">
    <property type="entry name" value="a domain/subunit of cytochrome bc1 complex (Ubiquinol-cytochrome c reductase)"/>
    <property type="match status" value="1"/>
</dbReference>
<dbReference type="SUPFAM" id="SSF81342">
    <property type="entry name" value="Transmembrane di-heme cytochromes"/>
    <property type="match status" value="1"/>
</dbReference>
<dbReference type="PROSITE" id="PS51003">
    <property type="entry name" value="CYTB_CTER"/>
    <property type="match status" value="1"/>
</dbReference>
<dbReference type="PROSITE" id="PS51002">
    <property type="entry name" value="CYTB_NTER"/>
    <property type="match status" value="1"/>
</dbReference>
<proteinExistence type="inferred from homology"/>